<proteinExistence type="evidence at protein level"/>
<comment type="function">
    <text>Mediates positive regulation of the glucanase operon (licST) by functioning as an antiterminator factor of transcription. Prevents termination at terminator lic-t.</text>
</comment>
<comment type="PTM">
    <text evidence="1">Phosphorylated.</text>
</comment>
<comment type="similarity">
    <text evidence="3">Belongs to the transcriptional antiterminator BglG family.</text>
</comment>
<accession>P39805</accession>
<reference key="1">
    <citation type="journal article" date="1996" name="J. Bacteriol.">
        <title>LicT, a Bacillus subtilis transcriptional antiterminator protein of the BglG family.</title>
        <authorList>
            <person name="Schnetz K."/>
            <person name="Stuelke J."/>
            <person name="Gertz S."/>
            <person name="Krueger S."/>
            <person name="Krieg M."/>
            <person name="Hecker M."/>
            <person name="Rak B."/>
        </authorList>
    </citation>
    <scope>NUCLEOTIDE SEQUENCE [GENOMIC DNA]</scope>
    <source>
        <strain>168 / BR151</strain>
    </source>
</reference>
<reference key="2">
    <citation type="journal article" date="1996" name="Microbiology">
        <title>Sequencing of a 65 kb region of the Bacillus subtilis genome containing the lic and cel loci, and creation of a 177 kb contig covering the gnt-sacXY region.</title>
        <authorList>
            <person name="Yoshida K."/>
            <person name="Shindo K."/>
            <person name="Sano H."/>
            <person name="Seki S."/>
            <person name="Fujimura M."/>
            <person name="Yanai N."/>
            <person name="Miwa Y."/>
            <person name="Fujita Y."/>
        </authorList>
    </citation>
    <scope>NUCLEOTIDE SEQUENCE [GENOMIC DNA]</scope>
    <source>
        <strain>168 / BGSC1A1</strain>
    </source>
</reference>
<reference key="3">
    <citation type="journal article" date="1997" name="Nature">
        <title>The complete genome sequence of the Gram-positive bacterium Bacillus subtilis.</title>
        <authorList>
            <person name="Kunst F."/>
            <person name="Ogasawara N."/>
            <person name="Moszer I."/>
            <person name="Albertini A.M."/>
            <person name="Alloni G."/>
            <person name="Azevedo V."/>
            <person name="Bertero M.G."/>
            <person name="Bessieres P."/>
            <person name="Bolotin A."/>
            <person name="Borchert S."/>
            <person name="Borriss R."/>
            <person name="Boursier L."/>
            <person name="Brans A."/>
            <person name="Braun M."/>
            <person name="Brignell S.C."/>
            <person name="Bron S."/>
            <person name="Brouillet S."/>
            <person name="Bruschi C.V."/>
            <person name="Caldwell B."/>
            <person name="Capuano V."/>
            <person name="Carter N.M."/>
            <person name="Choi S.-K."/>
            <person name="Codani J.-J."/>
            <person name="Connerton I.F."/>
            <person name="Cummings N.J."/>
            <person name="Daniel R.A."/>
            <person name="Denizot F."/>
            <person name="Devine K.M."/>
            <person name="Duesterhoeft A."/>
            <person name="Ehrlich S.D."/>
            <person name="Emmerson P.T."/>
            <person name="Entian K.-D."/>
            <person name="Errington J."/>
            <person name="Fabret C."/>
            <person name="Ferrari E."/>
            <person name="Foulger D."/>
            <person name="Fritz C."/>
            <person name="Fujita M."/>
            <person name="Fujita Y."/>
            <person name="Fuma S."/>
            <person name="Galizzi A."/>
            <person name="Galleron N."/>
            <person name="Ghim S.-Y."/>
            <person name="Glaser P."/>
            <person name="Goffeau A."/>
            <person name="Golightly E.J."/>
            <person name="Grandi G."/>
            <person name="Guiseppi G."/>
            <person name="Guy B.J."/>
            <person name="Haga K."/>
            <person name="Haiech J."/>
            <person name="Harwood C.R."/>
            <person name="Henaut A."/>
            <person name="Hilbert H."/>
            <person name="Holsappel S."/>
            <person name="Hosono S."/>
            <person name="Hullo M.-F."/>
            <person name="Itaya M."/>
            <person name="Jones L.-M."/>
            <person name="Joris B."/>
            <person name="Karamata D."/>
            <person name="Kasahara Y."/>
            <person name="Klaerr-Blanchard M."/>
            <person name="Klein C."/>
            <person name="Kobayashi Y."/>
            <person name="Koetter P."/>
            <person name="Koningstein G."/>
            <person name="Krogh S."/>
            <person name="Kumano M."/>
            <person name="Kurita K."/>
            <person name="Lapidus A."/>
            <person name="Lardinois S."/>
            <person name="Lauber J."/>
            <person name="Lazarevic V."/>
            <person name="Lee S.-M."/>
            <person name="Levine A."/>
            <person name="Liu H."/>
            <person name="Masuda S."/>
            <person name="Mauel C."/>
            <person name="Medigue C."/>
            <person name="Medina N."/>
            <person name="Mellado R.P."/>
            <person name="Mizuno M."/>
            <person name="Moestl D."/>
            <person name="Nakai S."/>
            <person name="Noback M."/>
            <person name="Noone D."/>
            <person name="O'Reilly M."/>
            <person name="Ogawa K."/>
            <person name="Ogiwara A."/>
            <person name="Oudega B."/>
            <person name="Park S.-H."/>
            <person name="Parro V."/>
            <person name="Pohl T.M."/>
            <person name="Portetelle D."/>
            <person name="Porwollik S."/>
            <person name="Prescott A.M."/>
            <person name="Presecan E."/>
            <person name="Pujic P."/>
            <person name="Purnelle B."/>
            <person name="Rapoport G."/>
            <person name="Rey M."/>
            <person name="Reynolds S."/>
            <person name="Rieger M."/>
            <person name="Rivolta C."/>
            <person name="Rocha E."/>
            <person name="Roche B."/>
            <person name="Rose M."/>
            <person name="Sadaie Y."/>
            <person name="Sato T."/>
            <person name="Scanlan E."/>
            <person name="Schleich S."/>
            <person name="Schroeter R."/>
            <person name="Scoffone F."/>
            <person name="Sekiguchi J."/>
            <person name="Sekowska A."/>
            <person name="Seror S.J."/>
            <person name="Serror P."/>
            <person name="Shin B.-S."/>
            <person name="Soldo B."/>
            <person name="Sorokin A."/>
            <person name="Tacconi E."/>
            <person name="Takagi T."/>
            <person name="Takahashi H."/>
            <person name="Takemaru K."/>
            <person name="Takeuchi M."/>
            <person name="Tamakoshi A."/>
            <person name="Tanaka T."/>
            <person name="Terpstra P."/>
            <person name="Tognoni A."/>
            <person name="Tosato V."/>
            <person name="Uchiyama S."/>
            <person name="Vandenbol M."/>
            <person name="Vannier F."/>
            <person name="Vassarotti A."/>
            <person name="Viari A."/>
            <person name="Wambutt R."/>
            <person name="Wedler E."/>
            <person name="Wedler H."/>
            <person name="Weitzenegger T."/>
            <person name="Winters P."/>
            <person name="Wipat A."/>
            <person name="Yamamoto H."/>
            <person name="Yamane K."/>
            <person name="Yasumoto K."/>
            <person name="Yata K."/>
            <person name="Yoshida K."/>
            <person name="Yoshikawa H.-F."/>
            <person name="Zumstein E."/>
            <person name="Yoshikawa H."/>
            <person name="Danchin A."/>
        </authorList>
    </citation>
    <scope>NUCLEOTIDE SEQUENCE [LARGE SCALE GENOMIC DNA]</scope>
    <source>
        <strain>168</strain>
    </source>
</reference>
<reference key="4">
    <citation type="journal article" date="2009" name="Microbiology">
        <title>From a consortium sequence to a unified sequence: the Bacillus subtilis 168 reference genome a decade later.</title>
        <authorList>
            <person name="Barbe V."/>
            <person name="Cruveiller S."/>
            <person name="Kunst F."/>
            <person name="Lenoble P."/>
            <person name="Meurice G."/>
            <person name="Sekowska A."/>
            <person name="Vallenet D."/>
            <person name="Wang T."/>
            <person name="Moszer I."/>
            <person name="Medigue C."/>
            <person name="Danchin A."/>
        </authorList>
    </citation>
    <scope>SEQUENCE REVISION TO 79</scope>
</reference>
<reference key="5">
    <citation type="journal article" date="1984" name="Nucleic Acids Res.">
        <title>The DNA sequence of the gene and genetic control sites for the excreted B. subtilis enzyme beta-glucanase.</title>
        <authorList>
            <person name="Murphy N."/>
            <person name="McConnell D.J."/>
            <person name="Cantwell B.A."/>
        </authorList>
    </citation>
    <scope>NUCLEOTIDE SEQUENCE [GENOMIC DNA] OF 193-277</scope>
</reference>
<evidence type="ECO:0000250" key="1"/>
<evidence type="ECO:0000255" key="2">
    <source>
        <dbReference type="PROSITE-ProRule" id="PRU00704"/>
    </source>
</evidence>
<evidence type="ECO:0000305" key="3"/>
<evidence type="ECO:0007829" key="4">
    <source>
        <dbReference type="PDB" id="1H99"/>
    </source>
</evidence>
<evidence type="ECO:0007829" key="5">
    <source>
        <dbReference type="PDB" id="1L1C"/>
    </source>
</evidence>
<evidence type="ECO:0007829" key="6">
    <source>
        <dbReference type="PDB" id="1TLV"/>
    </source>
</evidence>
<evidence type="ECO:0007829" key="7">
    <source>
        <dbReference type="PDB" id="6TWR"/>
    </source>
</evidence>
<keyword id="KW-0002">3D-structure</keyword>
<keyword id="KW-0010">Activator</keyword>
<keyword id="KW-0597">Phosphoprotein</keyword>
<keyword id="KW-1185">Reference proteome</keyword>
<keyword id="KW-0677">Repeat</keyword>
<keyword id="KW-0694">RNA-binding</keyword>
<keyword id="KW-0804">Transcription</keyword>
<keyword id="KW-0805">Transcription regulation</keyword>
<sequence length="277" mass="32317">MKIAKVINNNVISVVNEQGKELVVMGRGLAFQKKSGDDVDEARIEKVFTLDNKDVSEKFKTLLYDIPIECMEVSEEIISYAKLQLGKKLNDSIYVSLTDHINFAIQRNQKGLDIKNALLWETKRLYKDEFAIGKEALVMVKNKTGVSLPEDEAGFIALHIVNAELNEEMPNIINITKVMQEILSIVKYHFKIEFNEESLHYYRFVTHLKFFAQRLFNGTHMESQDDFLLDTVKEKYHRAYECTKKIQTYIEREYEHKLTSDELLYLTIHIERVVKQA</sequence>
<dbReference type="EMBL" id="Z28340">
    <property type="protein sequence ID" value="CAA82194.1"/>
    <property type="molecule type" value="Genomic_DNA"/>
</dbReference>
<dbReference type="EMBL" id="D83026">
    <property type="protein sequence ID" value="BAA11696.1"/>
    <property type="molecule type" value="Genomic_DNA"/>
</dbReference>
<dbReference type="EMBL" id="AL009126">
    <property type="protein sequence ID" value="CAB15944.2"/>
    <property type="molecule type" value="Genomic_DNA"/>
</dbReference>
<dbReference type="EMBL" id="X00754">
    <property type="protein sequence ID" value="CAA25326.1"/>
    <property type="molecule type" value="Genomic_DNA"/>
</dbReference>
<dbReference type="PIR" id="S47216">
    <property type="entry name" value="S47216"/>
</dbReference>
<dbReference type="RefSeq" id="NP_391787.2">
    <property type="nucleotide sequence ID" value="NC_000964.3"/>
</dbReference>
<dbReference type="RefSeq" id="WP_003242598.1">
    <property type="nucleotide sequence ID" value="NZ_OZ025638.1"/>
</dbReference>
<dbReference type="PDB" id="1H99">
    <property type="method" value="X-ray"/>
    <property type="resolution" value="1.55 A"/>
    <property type="chains" value="A=57-277"/>
</dbReference>
<dbReference type="PDB" id="1L1C">
    <property type="method" value="NMR"/>
    <property type="chains" value="A/B=1-55"/>
</dbReference>
<dbReference type="PDB" id="1TLV">
    <property type="method" value="X-ray"/>
    <property type="resolution" value="1.95 A"/>
    <property type="chains" value="A=57-274"/>
</dbReference>
<dbReference type="PDB" id="6TWR">
    <property type="method" value="NMR"/>
    <property type="chains" value="A/B=1-167"/>
</dbReference>
<dbReference type="PDBsum" id="1H99"/>
<dbReference type="PDBsum" id="1L1C"/>
<dbReference type="PDBsum" id="1TLV"/>
<dbReference type="PDBsum" id="6TWR"/>
<dbReference type="BMRB" id="P39805"/>
<dbReference type="SMR" id="P39805"/>
<dbReference type="FunCoup" id="P39805">
    <property type="interactions" value="32"/>
</dbReference>
<dbReference type="STRING" id="224308.BSU39080"/>
<dbReference type="DrugBank" id="DB04530">
    <property type="generic name" value="S,S-(2-Hydroxyethyl)Thiocysteine"/>
</dbReference>
<dbReference type="jPOST" id="P39805"/>
<dbReference type="PaxDb" id="224308-BSU39080"/>
<dbReference type="EnsemblBacteria" id="CAB15944">
    <property type="protein sequence ID" value="CAB15944"/>
    <property type="gene ID" value="BSU_39080"/>
</dbReference>
<dbReference type="GeneID" id="937503"/>
<dbReference type="KEGG" id="bsu:BSU39080"/>
<dbReference type="PATRIC" id="fig|224308.179.peg.4231"/>
<dbReference type="eggNOG" id="COG3711">
    <property type="taxonomic scope" value="Bacteria"/>
</dbReference>
<dbReference type="InParanoid" id="P39805"/>
<dbReference type="OrthoDB" id="9813552at2"/>
<dbReference type="PhylomeDB" id="P39805"/>
<dbReference type="BioCyc" id="BSUB:BSU39080-MONOMER"/>
<dbReference type="EvolutionaryTrace" id="P39805"/>
<dbReference type="Proteomes" id="UP000001570">
    <property type="component" value="Chromosome"/>
</dbReference>
<dbReference type="GO" id="GO:0003723">
    <property type="term" value="F:RNA binding"/>
    <property type="evidence" value="ECO:0007669"/>
    <property type="project" value="UniProtKB-KW"/>
</dbReference>
<dbReference type="GO" id="GO:0045893">
    <property type="term" value="P:positive regulation of DNA-templated transcription"/>
    <property type="evidence" value="ECO:0000315"/>
    <property type="project" value="CACAO"/>
</dbReference>
<dbReference type="Gene3D" id="2.30.24.10">
    <property type="entry name" value="CAT RNA-binding domain"/>
    <property type="match status" value="1"/>
</dbReference>
<dbReference type="Gene3D" id="1.10.1790.10">
    <property type="entry name" value="PRD domain"/>
    <property type="match status" value="2"/>
</dbReference>
<dbReference type="InterPro" id="IPR050661">
    <property type="entry name" value="BglG_antiterminators"/>
</dbReference>
<dbReference type="InterPro" id="IPR004341">
    <property type="entry name" value="CAT_RNA-bd_dom"/>
</dbReference>
<dbReference type="InterPro" id="IPR036650">
    <property type="entry name" value="CAT_RNA-bd_dom_sf"/>
</dbReference>
<dbReference type="InterPro" id="IPR011608">
    <property type="entry name" value="PRD"/>
</dbReference>
<dbReference type="InterPro" id="IPR036634">
    <property type="entry name" value="PRD_sf"/>
</dbReference>
<dbReference type="InterPro" id="IPR001550">
    <property type="entry name" value="Transcrpt_antitermin_CS"/>
</dbReference>
<dbReference type="NCBIfam" id="NF046042">
    <property type="entry name" value="LicT"/>
    <property type="match status" value="1"/>
</dbReference>
<dbReference type="PANTHER" id="PTHR30185">
    <property type="entry name" value="CRYPTIC BETA-GLUCOSIDE BGL OPERON ANTITERMINATOR"/>
    <property type="match status" value="1"/>
</dbReference>
<dbReference type="PANTHER" id="PTHR30185:SF15">
    <property type="entry name" value="CRYPTIC BETA-GLUCOSIDE BGL OPERON ANTITERMINATOR"/>
    <property type="match status" value="1"/>
</dbReference>
<dbReference type="Pfam" id="PF03123">
    <property type="entry name" value="CAT_RBD"/>
    <property type="match status" value="1"/>
</dbReference>
<dbReference type="Pfam" id="PF00874">
    <property type="entry name" value="PRD"/>
    <property type="match status" value="2"/>
</dbReference>
<dbReference type="SMART" id="SM01061">
    <property type="entry name" value="CAT_RBD"/>
    <property type="match status" value="1"/>
</dbReference>
<dbReference type="SUPFAM" id="SSF63520">
    <property type="entry name" value="PTS-regulatory domain, PRD"/>
    <property type="match status" value="2"/>
</dbReference>
<dbReference type="SUPFAM" id="SSF50151">
    <property type="entry name" value="SacY-like RNA-binding domain"/>
    <property type="match status" value="1"/>
</dbReference>
<dbReference type="PROSITE" id="PS00654">
    <property type="entry name" value="PRD_1"/>
    <property type="match status" value="1"/>
</dbReference>
<dbReference type="PROSITE" id="PS51372">
    <property type="entry name" value="PRD_2"/>
    <property type="match status" value="2"/>
</dbReference>
<name>LICT_BACSU</name>
<feature type="chain" id="PRO_0000204247" description="Transcription antiterminator LicT">
    <location>
        <begin position="1"/>
        <end position="277"/>
    </location>
</feature>
<feature type="domain" description="PRD 1" evidence="2">
    <location>
        <begin position="65"/>
        <end position="170"/>
    </location>
</feature>
<feature type="domain" description="PRD 2" evidence="2">
    <location>
        <begin position="171"/>
        <end position="277"/>
    </location>
</feature>
<feature type="sequence conflict" description="In Ref. 2; BAA11696." evidence="3" ref="2">
    <original>S</original>
    <variation>H</variation>
    <location>
        <position position="79"/>
    </location>
</feature>
<feature type="strand" evidence="5">
    <location>
        <begin position="3"/>
        <end position="8"/>
    </location>
</feature>
<feature type="strand" evidence="5">
    <location>
        <begin position="11"/>
        <end position="15"/>
    </location>
</feature>
<feature type="strand" evidence="5">
    <location>
        <begin position="21"/>
        <end position="25"/>
    </location>
</feature>
<feature type="strand" evidence="5">
    <location>
        <begin position="27"/>
        <end position="30"/>
    </location>
</feature>
<feature type="helix" evidence="5">
    <location>
        <begin position="41"/>
        <end position="43"/>
    </location>
</feature>
<feature type="strand" evidence="5">
    <location>
        <begin position="45"/>
        <end position="51"/>
    </location>
</feature>
<feature type="turn" evidence="7">
    <location>
        <begin position="53"/>
        <end position="55"/>
    </location>
</feature>
<feature type="helix" evidence="4">
    <location>
        <begin position="57"/>
        <end position="59"/>
    </location>
</feature>
<feature type="helix" evidence="6">
    <location>
        <begin position="63"/>
        <end position="65"/>
    </location>
</feature>
<feature type="helix" evidence="4">
    <location>
        <begin position="68"/>
        <end position="85"/>
    </location>
</feature>
<feature type="helix" evidence="4">
    <location>
        <begin position="92"/>
        <end position="109"/>
    </location>
</feature>
<feature type="helix" evidence="4">
    <location>
        <begin position="119"/>
        <end position="125"/>
    </location>
</feature>
<feature type="helix" evidence="4">
    <location>
        <begin position="127"/>
        <end position="144"/>
    </location>
</feature>
<feature type="helix" evidence="4">
    <location>
        <begin position="150"/>
        <end position="164"/>
    </location>
</feature>
<feature type="helix" evidence="4">
    <location>
        <begin position="170"/>
        <end position="190"/>
    </location>
</feature>
<feature type="helix" evidence="4">
    <location>
        <begin position="199"/>
        <end position="217"/>
    </location>
</feature>
<feature type="helix" evidence="4">
    <location>
        <begin position="227"/>
        <end position="235"/>
    </location>
</feature>
<feature type="helix" evidence="4">
    <location>
        <begin position="237"/>
        <end position="254"/>
    </location>
</feature>
<feature type="helix" evidence="4">
    <location>
        <begin position="260"/>
        <end position="274"/>
    </location>
</feature>
<organism>
    <name type="scientific">Bacillus subtilis (strain 168)</name>
    <dbReference type="NCBI Taxonomy" id="224308"/>
    <lineage>
        <taxon>Bacteria</taxon>
        <taxon>Bacillati</taxon>
        <taxon>Bacillota</taxon>
        <taxon>Bacilli</taxon>
        <taxon>Bacillales</taxon>
        <taxon>Bacillaceae</taxon>
        <taxon>Bacillus</taxon>
    </lineage>
</organism>
<gene>
    <name type="primary">licT</name>
    <name type="ordered locus">BSU39080</name>
    <name type="ORF">N15A</name>
</gene>
<protein>
    <recommendedName>
        <fullName>Transcription antiterminator LicT</fullName>
    </recommendedName>
</protein>